<accession>O48089</accession>
<evidence type="ECO:0000250" key="1"/>
<evidence type="ECO:0000250" key="2">
    <source>
        <dbReference type="UniProtKB" id="P00157"/>
    </source>
</evidence>
<evidence type="ECO:0000255" key="3">
    <source>
        <dbReference type="PROSITE-ProRule" id="PRU00967"/>
    </source>
</evidence>
<evidence type="ECO:0000255" key="4">
    <source>
        <dbReference type="PROSITE-ProRule" id="PRU00968"/>
    </source>
</evidence>
<keyword id="KW-0249">Electron transport</keyword>
<keyword id="KW-0349">Heme</keyword>
<keyword id="KW-0408">Iron</keyword>
<keyword id="KW-0472">Membrane</keyword>
<keyword id="KW-0479">Metal-binding</keyword>
<keyword id="KW-0496">Mitochondrion</keyword>
<keyword id="KW-0999">Mitochondrion inner membrane</keyword>
<keyword id="KW-0679">Respiratory chain</keyword>
<keyword id="KW-0812">Transmembrane</keyword>
<keyword id="KW-1133">Transmembrane helix</keyword>
<keyword id="KW-0813">Transport</keyword>
<keyword id="KW-0830">Ubiquinone</keyword>
<comment type="function">
    <text evidence="2">Component of the ubiquinol-cytochrome c reductase complex (complex III or cytochrome b-c1 complex) that is part of the mitochondrial respiratory chain. The b-c1 complex mediates electron transfer from ubiquinol to cytochrome c. Contributes to the generation of a proton gradient across the mitochondrial membrane that is then used for ATP synthesis.</text>
</comment>
<comment type="cofactor">
    <cofactor evidence="2">
        <name>heme b</name>
        <dbReference type="ChEBI" id="CHEBI:60344"/>
    </cofactor>
    <text evidence="2">Binds 2 heme b groups non-covalently.</text>
</comment>
<comment type="subunit">
    <text evidence="2">The cytochrome bc1 complex contains 3 respiratory subunits (MT-CYB, CYC1 and UQCRFS1), 2 core proteins (UQCRC1 and UQCRC2) and probably 6 low-molecular weight proteins.</text>
</comment>
<comment type="subcellular location">
    <subcellularLocation>
        <location evidence="2">Mitochondrion inner membrane</location>
        <topology evidence="2">Multi-pass membrane protein</topology>
    </subcellularLocation>
</comment>
<comment type="miscellaneous">
    <text evidence="1">Heme 1 (or BL or b562) is low-potential and absorbs at about 562 nm, and heme 2 (or BH or b566) is high-potential and absorbs at about 566 nm.</text>
</comment>
<comment type="similarity">
    <text evidence="3 4">Belongs to the cytochrome b family.</text>
</comment>
<comment type="caution">
    <text evidence="2">The full-length protein contains only eight transmembrane helices, not nine as predicted by bioinformatics tools.</text>
</comment>
<dbReference type="EMBL" id="U69834">
    <property type="protein sequence ID" value="AAC01879.1"/>
    <property type="molecule type" value="Genomic_DNA"/>
</dbReference>
<dbReference type="SMR" id="O48089"/>
<dbReference type="GO" id="GO:0005743">
    <property type="term" value="C:mitochondrial inner membrane"/>
    <property type="evidence" value="ECO:0007669"/>
    <property type="project" value="UniProtKB-SubCell"/>
</dbReference>
<dbReference type="GO" id="GO:0045275">
    <property type="term" value="C:respiratory chain complex III"/>
    <property type="evidence" value="ECO:0007669"/>
    <property type="project" value="InterPro"/>
</dbReference>
<dbReference type="GO" id="GO:0046872">
    <property type="term" value="F:metal ion binding"/>
    <property type="evidence" value="ECO:0007669"/>
    <property type="project" value="UniProtKB-KW"/>
</dbReference>
<dbReference type="GO" id="GO:0008121">
    <property type="term" value="F:ubiquinol-cytochrome-c reductase activity"/>
    <property type="evidence" value="ECO:0007669"/>
    <property type="project" value="InterPro"/>
</dbReference>
<dbReference type="GO" id="GO:0006122">
    <property type="term" value="P:mitochondrial electron transport, ubiquinol to cytochrome c"/>
    <property type="evidence" value="ECO:0007669"/>
    <property type="project" value="TreeGrafter"/>
</dbReference>
<dbReference type="CDD" id="cd00290">
    <property type="entry name" value="cytochrome_b_C"/>
    <property type="match status" value="1"/>
</dbReference>
<dbReference type="CDD" id="cd00284">
    <property type="entry name" value="Cytochrome_b_N"/>
    <property type="match status" value="1"/>
</dbReference>
<dbReference type="FunFam" id="1.20.810.10:FF:000002">
    <property type="entry name" value="Cytochrome b"/>
    <property type="match status" value="1"/>
</dbReference>
<dbReference type="Gene3D" id="1.20.810.10">
    <property type="entry name" value="Cytochrome Bc1 Complex, Chain C"/>
    <property type="match status" value="1"/>
</dbReference>
<dbReference type="InterPro" id="IPR005798">
    <property type="entry name" value="Cyt_b/b6_C"/>
</dbReference>
<dbReference type="InterPro" id="IPR036150">
    <property type="entry name" value="Cyt_b/b6_C_sf"/>
</dbReference>
<dbReference type="InterPro" id="IPR005797">
    <property type="entry name" value="Cyt_b/b6_N"/>
</dbReference>
<dbReference type="InterPro" id="IPR027387">
    <property type="entry name" value="Cytb/b6-like_sf"/>
</dbReference>
<dbReference type="InterPro" id="IPR030689">
    <property type="entry name" value="Cytochrome_b"/>
</dbReference>
<dbReference type="InterPro" id="IPR048260">
    <property type="entry name" value="Cytochrome_b_C_euk/bac"/>
</dbReference>
<dbReference type="InterPro" id="IPR048259">
    <property type="entry name" value="Cytochrome_b_N_euk/bac"/>
</dbReference>
<dbReference type="InterPro" id="IPR016174">
    <property type="entry name" value="Di-haem_cyt_TM"/>
</dbReference>
<dbReference type="PANTHER" id="PTHR19271">
    <property type="entry name" value="CYTOCHROME B"/>
    <property type="match status" value="1"/>
</dbReference>
<dbReference type="PANTHER" id="PTHR19271:SF16">
    <property type="entry name" value="CYTOCHROME B"/>
    <property type="match status" value="1"/>
</dbReference>
<dbReference type="Pfam" id="PF00032">
    <property type="entry name" value="Cytochrom_B_C"/>
    <property type="match status" value="1"/>
</dbReference>
<dbReference type="Pfam" id="PF00033">
    <property type="entry name" value="Cytochrome_B"/>
    <property type="match status" value="1"/>
</dbReference>
<dbReference type="PIRSF" id="PIRSF038885">
    <property type="entry name" value="COB"/>
    <property type="match status" value="1"/>
</dbReference>
<dbReference type="SUPFAM" id="SSF81648">
    <property type="entry name" value="a domain/subunit of cytochrome bc1 complex (Ubiquinol-cytochrome c reductase)"/>
    <property type="match status" value="1"/>
</dbReference>
<dbReference type="SUPFAM" id="SSF81342">
    <property type="entry name" value="Transmembrane di-heme cytochromes"/>
    <property type="match status" value="1"/>
</dbReference>
<dbReference type="PROSITE" id="PS51003">
    <property type="entry name" value="CYTB_CTER"/>
    <property type="match status" value="1"/>
</dbReference>
<dbReference type="PROSITE" id="PS51002">
    <property type="entry name" value="CYTB_NTER"/>
    <property type="match status" value="1"/>
</dbReference>
<proteinExistence type="inferred from homology"/>
<protein>
    <recommendedName>
        <fullName>Cytochrome b</fullName>
    </recommendedName>
    <alternativeName>
        <fullName>Complex III subunit 3</fullName>
    </alternativeName>
    <alternativeName>
        <fullName>Complex III subunit III</fullName>
    </alternativeName>
    <alternativeName>
        <fullName>Cytochrome b-c1 complex subunit 3</fullName>
    </alternativeName>
    <alternativeName>
        <fullName>Ubiquinol-cytochrome-c reductase complex cytochrome b subunit</fullName>
    </alternativeName>
</protein>
<reference key="1">
    <citation type="thesis" date="1997" institute="Queen's University / Kingston" country="Canada">
        <title>Hic Sunt Serpentes -- molecular phylogenetics and the Boidae (Serpentes: Booidea).</title>
        <authorList>
            <person name="Campbell B.N."/>
        </authorList>
    </citation>
    <scope>NUCLEOTIDE SEQUENCE [GENOMIC DNA]</scope>
</reference>
<geneLocation type="mitochondrion"/>
<gene>
    <name type="primary">MT-CYB</name>
    <name type="synonym">COB</name>
    <name type="synonym">CYTB</name>
    <name type="synonym">MTCYB</name>
</gene>
<sequence>MTTKYTKTTPILLIINSSFIDLPTPWNISAWWNFGSLLGICLLLEIITGLFLAMHYTADISSAFSSVAHIHRDVQHGWLIRNLHANSASMFFICIYLHIGRGLYYGSYIYTETWSIGVLLLLLVMATAFFGYVLPWGQMSFWGATVITNLLSTMPYLGPTLVKWVWGGFAVDNATLTRFFTFHFMLPFIILGVSMIHLLFLHENGSNNPTGLNSDTDKIPFHPYYSYKDLLGTLMMLALLIFFALFSPNLLGDPENFTPANPLITPPHIKPEWYFLFTYAILRSIPNKLGGVMALLFSILILLMLPMTHMSKQRTMSYRPMSQAVFWLLVSDIIILTSIGGQPVEHPFIIIGQLASTLYFTFFLLLMPMVALMENKLLKW</sequence>
<feature type="chain" id="PRO_0000061076" description="Cytochrome b">
    <location>
        <begin position="1"/>
        <end position="380"/>
    </location>
</feature>
<feature type="transmembrane region" description="Helical" evidence="2">
    <location>
        <begin position="34"/>
        <end position="54"/>
    </location>
</feature>
<feature type="transmembrane region" description="Helical" evidence="2">
    <location>
        <begin position="78"/>
        <end position="99"/>
    </location>
</feature>
<feature type="transmembrane region" description="Helical" evidence="2">
    <location>
        <begin position="114"/>
        <end position="134"/>
    </location>
</feature>
<feature type="transmembrane region" description="Helical" evidence="2">
    <location>
        <begin position="179"/>
        <end position="199"/>
    </location>
</feature>
<feature type="transmembrane region" description="Helical" evidence="2">
    <location>
        <begin position="227"/>
        <end position="247"/>
    </location>
</feature>
<feature type="transmembrane region" description="Helical" evidence="2">
    <location>
        <begin position="289"/>
        <end position="309"/>
    </location>
</feature>
<feature type="transmembrane region" description="Helical" evidence="2">
    <location>
        <begin position="321"/>
        <end position="341"/>
    </location>
</feature>
<feature type="transmembrane region" description="Helical" evidence="2">
    <location>
        <begin position="348"/>
        <end position="368"/>
    </location>
</feature>
<feature type="binding site" description="axial binding residue" evidence="2">
    <location>
        <position position="84"/>
    </location>
    <ligand>
        <name>heme b</name>
        <dbReference type="ChEBI" id="CHEBI:60344"/>
        <label>b562</label>
    </ligand>
    <ligandPart>
        <name>Fe</name>
        <dbReference type="ChEBI" id="CHEBI:18248"/>
    </ligandPart>
</feature>
<feature type="binding site" description="axial binding residue" evidence="2">
    <location>
        <position position="98"/>
    </location>
    <ligand>
        <name>heme b</name>
        <dbReference type="ChEBI" id="CHEBI:60344"/>
        <label>b566</label>
    </ligand>
    <ligandPart>
        <name>Fe</name>
        <dbReference type="ChEBI" id="CHEBI:18248"/>
    </ligandPart>
</feature>
<feature type="binding site" description="axial binding residue" evidence="2">
    <location>
        <position position="183"/>
    </location>
    <ligand>
        <name>heme b</name>
        <dbReference type="ChEBI" id="CHEBI:60344"/>
        <label>b562</label>
    </ligand>
    <ligandPart>
        <name>Fe</name>
        <dbReference type="ChEBI" id="CHEBI:18248"/>
    </ligandPart>
</feature>
<feature type="binding site" description="axial binding residue" evidence="2">
    <location>
        <position position="197"/>
    </location>
    <ligand>
        <name>heme b</name>
        <dbReference type="ChEBI" id="CHEBI:60344"/>
        <label>b566</label>
    </ligand>
    <ligandPart>
        <name>Fe</name>
        <dbReference type="ChEBI" id="CHEBI:18248"/>
    </ligandPart>
</feature>
<feature type="binding site" evidence="2">
    <location>
        <position position="202"/>
    </location>
    <ligand>
        <name>a ubiquinone</name>
        <dbReference type="ChEBI" id="CHEBI:16389"/>
    </ligand>
</feature>
<name>CYB_ZOOVI</name>
<organism>
    <name type="scientific">Zootoca vivipara</name>
    <name type="common">Common lizard</name>
    <name type="synonym">Lacerta vivipara</name>
    <dbReference type="NCBI Taxonomy" id="8524"/>
    <lineage>
        <taxon>Eukaryota</taxon>
        <taxon>Metazoa</taxon>
        <taxon>Chordata</taxon>
        <taxon>Craniata</taxon>
        <taxon>Vertebrata</taxon>
        <taxon>Euteleostomi</taxon>
        <taxon>Lepidosauria</taxon>
        <taxon>Squamata</taxon>
        <taxon>Bifurcata</taxon>
        <taxon>Unidentata</taxon>
        <taxon>Episquamata</taxon>
        <taxon>Laterata</taxon>
        <taxon>Lacertibaenia</taxon>
        <taxon>Lacertidae</taxon>
        <taxon>Zootoca</taxon>
    </lineage>
</organism>